<name>YI7F_SCHPO</name>
<keyword id="KW-0963">Cytoplasm</keyword>
<keyword id="KW-0539">Nucleus</keyword>
<keyword id="KW-1185">Reference proteome</keyword>
<feature type="chain" id="PRO_0000351444" description="Uncharacterized AIM2 family protein C977.15">
    <location>
        <begin position="1"/>
        <end position="247"/>
    </location>
</feature>
<proteinExistence type="inferred from homology"/>
<accession>Q9P7U1</accession>
<comment type="subcellular location">
    <subcellularLocation>
        <location evidence="1">Cytoplasm</location>
    </subcellularLocation>
    <subcellularLocation>
        <location evidence="1">Nucleus</location>
    </subcellularLocation>
</comment>
<comment type="similarity">
    <text evidence="2">Belongs to the AIM2 family.</text>
</comment>
<protein>
    <recommendedName>
        <fullName>Uncharacterized AIM2 family protein C977.15</fullName>
    </recommendedName>
</protein>
<reference key="1">
    <citation type="journal article" date="2002" name="Nature">
        <title>The genome sequence of Schizosaccharomyces pombe.</title>
        <authorList>
            <person name="Wood V."/>
            <person name="Gwilliam R."/>
            <person name="Rajandream M.A."/>
            <person name="Lyne M.H."/>
            <person name="Lyne R."/>
            <person name="Stewart A."/>
            <person name="Sgouros J.G."/>
            <person name="Peat N."/>
            <person name="Hayles J."/>
            <person name="Baker S.G."/>
            <person name="Basham D."/>
            <person name="Bowman S."/>
            <person name="Brooks K."/>
            <person name="Brown D."/>
            <person name="Brown S."/>
            <person name="Chillingworth T."/>
            <person name="Churcher C.M."/>
            <person name="Collins M."/>
            <person name="Connor R."/>
            <person name="Cronin A."/>
            <person name="Davis P."/>
            <person name="Feltwell T."/>
            <person name="Fraser A."/>
            <person name="Gentles S."/>
            <person name="Goble A."/>
            <person name="Hamlin N."/>
            <person name="Harris D.E."/>
            <person name="Hidalgo J."/>
            <person name="Hodgson G."/>
            <person name="Holroyd S."/>
            <person name="Hornsby T."/>
            <person name="Howarth S."/>
            <person name="Huckle E.J."/>
            <person name="Hunt S."/>
            <person name="Jagels K."/>
            <person name="James K.D."/>
            <person name="Jones L."/>
            <person name="Jones M."/>
            <person name="Leather S."/>
            <person name="McDonald S."/>
            <person name="McLean J."/>
            <person name="Mooney P."/>
            <person name="Moule S."/>
            <person name="Mungall K.L."/>
            <person name="Murphy L.D."/>
            <person name="Niblett D."/>
            <person name="Odell C."/>
            <person name="Oliver K."/>
            <person name="O'Neil S."/>
            <person name="Pearson D."/>
            <person name="Quail M.A."/>
            <person name="Rabbinowitsch E."/>
            <person name="Rutherford K.M."/>
            <person name="Rutter S."/>
            <person name="Saunders D."/>
            <person name="Seeger K."/>
            <person name="Sharp S."/>
            <person name="Skelton J."/>
            <person name="Simmonds M.N."/>
            <person name="Squares R."/>
            <person name="Squares S."/>
            <person name="Stevens K."/>
            <person name="Taylor K."/>
            <person name="Taylor R.G."/>
            <person name="Tivey A."/>
            <person name="Walsh S.V."/>
            <person name="Warren T."/>
            <person name="Whitehead S."/>
            <person name="Woodward J.R."/>
            <person name="Volckaert G."/>
            <person name="Aert R."/>
            <person name="Robben J."/>
            <person name="Grymonprez B."/>
            <person name="Weltjens I."/>
            <person name="Vanstreels E."/>
            <person name="Rieger M."/>
            <person name="Schaefer M."/>
            <person name="Mueller-Auer S."/>
            <person name="Gabel C."/>
            <person name="Fuchs M."/>
            <person name="Duesterhoeft A."/>
            <person name="Fritzc C."/>
            <person name="Holzer E."/>
            <person name="Moestl D."/>
            <person name="Hilbert H."/>
            <person name="Borzym K."/>
            <person name="Langer I."/>
            <person name="Beck A."/>
            <person name="Lehrach H."/>
            <person name="Reinhardt R."/>
            <person name="Pohl T.M."/>
            <person name="Eger P."/>
            <person name="Zimmermann W."/>
            <person name="Wedler H."/>
            <person name="Wambutt R."/>
            <person name="Purnelle B."/>
            <person name="Goffeau A."/>
            <person name="Cadieu E."/>
            <person name="Dreano S."/>
            <person name="Gloux S."/>
            <person name="Lelaure V."/>
            <person name="Mottier S."/>
            <person name="Galibert F."/>
            <person name="Aves S.J."/>
            <person name="Xiang Z."/>
            <person name="Hunt C."/>
            <person name="Moore K."/>
            <person name="Hurst S.M."/>
            <person name="Lucas M."/>
            <person name="Rochet M."/>
            <person name="Gaillardin C."/>
            <person name="Tallada V.A."/>
            <person name="Garzon A."/>
            <person name="Thode G."/>
            <person name="Daga R.R."/>
            <person name="Cruzado L."/>
            <person name="Jimenez J."/>
            <person name="Sanchez M."/>
            <person name="del Rey F."/>
            <person name="Benito J."/>
            <person name="Dominguez A."/>
            <person name="Revuelta J.L."/>
            <person name="Moreno S."/>
            <person name="Armstrong J."/>
            <person name="Forsburg S.L."/>
            <person name="Cerutti L."/>
            <person name="Lowe T."/>
            <person name="McCombie W.R."/>
            <person name="Paulsen I."/>
            <person name="Potashkin J."/>
            <person name="Shpakovski G.V."/>
            <person name="Ussery D."/>
            <person name="Barrell B.G."/>
            <person name="Nurse P."/>
        </authorList>
    </citation>
    <scope>NUCLEOTIDE SEQUENCE [LARGE SCALE GENOMIC DNA]</scope>
    <source>
        <strain>972 / ATCC 24843</strain>
    </source>
</reference>
<reference key="2">
    <citation type="journal article" date="2006" name="Nat. Biotechnol.">
        <title>ORFeome cloning and global analysis of protein localization in the fission yeast Schizosaccharomyces pombe.</title>
        <authorList>
            <person name="Matsuyama A."/>
            <person name="Arai R."/>
            <person name="Yashiroda Y."/>
            <person name="Shirai A."/>
            <person name="Kamata A."/>
            <person name="Sekido S."/>
            <person name="Kobayashi Y."/>
            <person name="Hashimoto A."/>
            <person name="Hamamoto M."/>
            <person name="Hiraoka Y."/>
            <person name="Horinouchi S."/>
            <person name="Yoshida M."/>
        </authorList>
    </citation>
    <scope>SUBCELLULAR LOCATION [LARGE SCALE ANALYSIS]</scope>
</reference>
<organism>
    <name type="scientific">Schizosaccharomyces pombe (strain 972 / ATCC 24843)</name>
    <name type="common">Fission yeast</name>
    <dbReference type="NCBI Taxonomy" id="284812"/>
    <lineage>
        <taxon>Eukaryota</taxon>
        <taxon>Fungi</taxon>
        <taxon>Dikarya</taxon>
        <taxon>Ascomycota</taxon>
        <taxon>Taphrinomycotina</taxon>
        <taxon>Schizosaccharomycetes</taxon>
        <taxon>Schizosaccharomycetales</taxon>
        <taxon>Schizosaccharomycetaceae</taxon>
        <taxon>Schizosaccharomyces</taxon>
    </lineage>
</organism>
<gene>
    <name type="ORF">SPAC977.15</name>
</gene>
<dbReference type="EMBL" id="CU329670">
    <property type="protein sequence ID" value="CAB69637.1"/>
    <property type="molecule type" value="Genomic_DNA"/>
</dbReference>
<dbReference type="PIR" id="T50286">
    <property type="entry name" value="T50286"/>
</dbReference>
<dbReference type="RefSeq" id="NP_592786.1">
    <property type="nucleotide sequence ID" value="NM_001018186.2"/>
</dbReference>
<dbReference type="SMR" id="Q9P7U1"/>
<dbReference type="BioGRID" id="279735">
    <property type="interactions" value="23"/>
</dbReference>
<dbReference type="FunCoup" id="Q9P7U1">
    <property type="interactions" value="22"/>
</dbReference>
<dbReference type="STRING" id="284812.Q9P7U1"/>
<dbReference type="ESTHER" id="schpo-SPAC977.15">
    <property type="family name" value="Dienelactone_hydrolase"/>
</dbReference>
<dbReference type="PaxDb" id="4896-SPAC977.15.1"/>
<dbReference type="EnsemblFungi" id="SPAC977.15.1">
    <property type="protein sequence ID" value="SPAC977.15.1:pep"/>
    <property type="gene ID" value="SPAC977.15"/>
</dbReference>
<dbReference type="KEGG" id="spo:2543311"/>
<dbReference type="PomBase" id="SPAC977.15"/>
<dbReference type="VEuPathDB" id="FungiDB:SPAC977.15"/>
<dbReference type="eggNOG" id="KOG3043">
    <property type="taxonomic scope" value="Eukaryota"/>
</dbReference>
<dbReference type="HOGENOM" id="CLU_054590_0_0_1"/>
<dbReference type="InParanoid" id="Q9P7U1"/>
<dbReference type="OMA" id="SKACCTR"/>
<dbReference type="PhylomeDB" id="Q9P7U1"/>
<dbReference type="PRO" id="PR:Q9P7U1"/>
<dbReference type="Proteomes" id="UP000002485">
    <property type="component" value="Chromosome I"/>
</dbReference>
<dbReference type="GO" id="GO:0005829">
    <property type="term" value="C:cytosol"/>
    <property type="evidence" value="ECO:0007005"/>
    <property type="project" value="PomBase"/>
</dbReference>
<dbReference type="GO" id="GO:0005634">
    <property type="term" value="C:nucleus"/>
    <property type="evidence" value="ECO:0007005"/>
    <property type="project" value="PomBase"/>
</dbReference>
<dbReference type="GO" id="GO:0016787">
    <property type="term" value="F:hydrolase activity"/>
    <property type="evidence" value="ECO:0007669"/>
    <property type="project" value="InterPro"/>
</dbReference>
<dbReference type="Gene3D" id="3.40.50.1820">
    <property type="entry name" value="alpha/beta hydrolase"/>
    <property type="match status" value="1"/>
</dbReference>
<dbReference type="InterPro" id="IPR029058">
    <property type="entry name" value="AB_hydrolase_fold"/>
</dbReference>
<dbReference type="InterPro" id="IPR002925">
    <property type="entry name" value="Dienelactn_hydro"/>
</dbReference>
<dbReference type="PANTHER" id="PTHR47668:SF1">
    <property type="entry name" value="DIENELACTONE HYDROLASE DOMAIN-CONTAINING PROTEIN-RELATED"/>
    <property type="match status" value="1"/>
</dbReference>
<dbReference type="PANTHER" id="PTHR47668">
    <property type="entry name" value="DIENELACTONE HYDROLASE FAMILY PROTEIN (AFU_ORTHOLOGUE AFUA_6G01940)"/>
    <property type="match status" value="1"/>
</dbReference>
<dbReference type="Pfam" id="PF01738">
    <property type="entry name" value="DLH"/>
    <property type="match status" value="1"/>
</dbReference>
<dbReference type="SUPFAM" id="SSF53474">
    <property type="entry name" value="alpha/beta-Hydrolases"/>
    <property type="match status" value="1"/>
</dbReference>
<evidence type="ECO:0000269" key="1">
    <source>
    </source>
</evidence>
<evidence type="ECO:0000305" key="2"/>
<sequence length="247" mass="28253">MPCCPTKSGAAPTNRNYELQGEMLKDIGGMQTYFTGKRSSKVVLIGFMDVFGLSKQIKEGADQLANHELAIYLPDFLNGETASIEMIDPKTIEQKEARSKFMEKISSPLHWPKLTKVIEDIERIHGQDVKIGAYGFCWGAKVLITYPNKERFLRIGCAHPSLLDPVDAKHVHCPVCFLCSKDEDPEEVDAWKKSFENSPYFSESYFETFGKMHHGWMAARANLSDPENRKYFDLGYQIFLKFFKELF</sequence>